<keyword id="KW-0687">Ribonucleoprotein</keyword>
<keyword id="KW-0689">Ribosomal protein</keyword>
<protein>
    <recommendedName>
        <fullName evidence="1">Small ribosomal subunit protein uS9</fullName>
    </recommendedName>
    <alternativeName>
        <fullName evidence="3">30S ribosomal protein S9</fullName>
    </alternativeName>
</protein>
<reference key="1">
    <citation type="journal article" date="2014" name="Stand. Genomic Sci.">
        <title>Complete genome sequence of Anabaena variabilis ATCC 29413.</title>
        <authorList>
            <person name="Thiel T."/>
            <person name="Pratte B.S."/>
            <person name="Zhong J."/>
            <person name="Goodwin L."/>
            <person name="Copeland A."/>
            <person name="Lucas S."/>
            <person name="Han C."/>
            <person name="Pitluck S."/>
            <person name="Land M.L."/>
            <person name="Kyrpides N.C."/>
            <person name="Woyke T."/>
        </authorList>
    </citation>
    <scope>NUCLEOTIDE SEQUENCE [LARGE SCALE GENOMIC DNA]</scope>
    <source>
        <strain>ATCC 29413 / PCC 7937</strain>
    </source>
</reference>
<comment type="similarity">
    <text evidence="1">Belongs to the universal ribosomal protein uS9 family.</text>
</comment>
<name>RS9_TRIV2</name>
<accession>Q3MF93</accession>
<organism>
    <name type="scientific">Trichormus variabilis (strain ATCC 29413 / PCC 7937)</name>
    <name type="common">Anabaena variabilis</name>
    <dbReference type="NCBI Taxonomy" id="240292"/>
    <lineage>
        <taxon>Bacteria</taxon>
        <taxon>Bacillati</taxon>
        <taxon>Cyanobacteriota</taxon>
        <taxon>Cyanophyceae</taxon>
        <taxon>Nostocales</taxon>
        <taxon>Nostocaceae</taxon>
        <taxon>Trichormus</taxon>
    </lineage>
</organism>
<evidence type="ECO:0000255" key="1">
    <source>
        <dbReference type="HAMAP-Rule" id="MF_00532"/>
    </source>
</evidence>
<evidence type="ECO:0000256" key="2">
    <source>
        <dbReference type="SAM" id="MobiDB-lite"/>
    </source>
</evidence>
<evidence type="ECO:0000305" key="3"/>
<sequence>MVVAEANSGRAVYWGTGRRKSAVARVRLVPGTGQLIVNGKPGDLYFQFNANYLGVIKAPLETLGLENEYDILVKAEGGGLTGQADSVRLGVARALCQLDPENRPPLKTEGYLTRDPRAKERKKYGLHKARKAPQYSKR</sequence>
<dbReference type="EMBL" id="CP000117">
    <property type="protein sequence ID" value="ABA20343.1"/>
    <property type="molecule type" value="Genomic_DNA"/>
</dbReference>
<dbReference type="RefSeq" id="WP_010998326.1">
    <property type="nucleotide sequence ID" value="NC_007413.1"/>
</dbReference>
<dbReference type="SMR" id="Q3MF93"/>
<dbReference type="STRING" id="240292.Ava_0719"/>
<dbReference type="GeneID" id="58723377"/>
<dbReference type="KEGG" id="ava:Ava_0719"/>
<dbReference type="eggNOG" id="COG0103">
    <property type="taxonomic scope" value="Bacteria"/>
</dbReference>
<dbReference type="HOGENOM" id="CLU_046483_2_1_3"/>
<dbReference type="Proteomes" id="UP000002533">
    <property type="component" value="Chromosome"/>
</dbReference>
<dbReference type="GO" id="GO:0022627">
    <property type="term" value="C:cytosolic small ribosomal subunit"/>
    <property type="evidence" value="ECO:0007669"/>
    <property type="project" value="TreeGrafter"/>
</dbReference>
<dbReference type="GO" id="GO:0003723">
    <property type="term" value="F:RNA binding"/>
    <property type="evidence" value="ECO:0007669"/>
    <property type="project" value="TreeGrafter"/>
</dbReference>
<dbReference type="GO" id="GO:0003735">
    <property type="term" value="F:structural constituent of ribosome"/>
    <property type="evidence" value="ECO:0007669"/>
    <property type="project" value="InterPro"/>
</dbReference>
<dbReference type="GO" id="GO:0006412">
    <property type="term" value="P:translation"/>
    <property type="evidence" value="ECO:0007669"/>
    <property type="project" value="UniProtKB-UniRule"/>
</dbReference>
<dbReference type="FunFam" id="3.30.230.10:FF:000001">
    <property type="entry name" value="30S ribosomal protein S9"/>
    <property type="match status" value="1"/>
</dbReference>
<dbReference type="Gene3D" id="3.30.230.10">
    <property type="match status" value="1"/>
</dbReference>
<dbReference type="HAMAP" id="MF_00532_B">
    <property type="entry name" value="Ribosomal_uS9_B"/>
    <property type="match status" value="1"/>
</dbReference>
<dbReference type="InterPro" id="IPR020568">
    <property type="entry name" value="Ribosomal_Su5_D2-typ_SF"/>
</dbReference>
<dbReference type="InterPro" id="IPR000754">
    <property type="entry name" value="Ribosomal_uS9"/>
</dbReference>
<dbReference type="InterPro" id="IPR023035">
    <property type="entry name" value="Ribosomal_uS9_bac/plastid"/>
</dbReference>
<dbReference type="InterPro" id="IPR020574">
    <property type="entry name" value="Ribosomal_uS9_CS"/>
</dbReference>
<dbReference type="InterPro" id="IPR014721">
    <property type="entry name" value="Ribsml_uS5_D2-typ_fold_subgr"/>
</dbReference>
<dbReference type="NCBIfam" id="NF001099">
    <property type="entry name" value="PRK00132.1"/>
    <property type="match status" value="1"/>
</dbReference>
<dbReference type="PANTHER" id="PTHR21569">
    <property type="entry name" value="RIBOSOMAL PROTEIN S9"/>
    <property type="match status" value="1"/>
</dbReference>
<dbReference type="PANTHER" id="PTHR21569:SF1">
    <property type="entry name" value="SMALL RIBOSOMAL SUBUNIT PROTEIN US9M"/>
    <property type="match status" value="1"/>
</dbReference>
<dbReference type="Pfam" id="PF00380">
    <property type="entry name" value="Ribosomal_S9"/>
    <property type="match status" value="1"/>
</dbReference>
<dbReference type="SUPFAM" id="SSF54211">
    <property type="entry name" value="Ribosomal protein S5 domain 2-like"/>
    <property type="match status" value="1"/>
</dbReference>
<dbReference type="PROSITE" id="PS00360">
    <property type="entry name" value="RIBOSOMAL_S9"/>
    <property type="match status" value="1"/>
</dbReference>
<gene>
    <name evidence="1" type="primary">rpsI</name>
    <name evidence="1" type="synonym">rps9</name>
    <name type="ordered locus">Ava_0719</name>
</gene>
<proteinExistence type="inferred from homology"/>
<feature type="chain" id="PRO_1000051154" description="Small ribosomal subunit protein uS9">
    <location>
        <begin position="1"/>
        <end position="138"/>
    </location>
</feature>
<feature type="region of interest" description="Disordered" evidence="2">
    <location>
        <begin position="100"/>
        <end position="138"/>
    </location>
</feature>
<feature type="compositionally biased region" description="Basic and acidic residues" evidence="2">
    <location>
        <begin position="100"/>
        <end position="118"/>
    </location>
</feature>
<feature type="compositionally biased region" description="Basic residues" evidence="2">
    <location>
        <begin position="119"/>
        <end position="138"/>
    </location>
</feature>